<keyword id="KW-0456">Lyase</keyword>
<keyword id="KW-1185">Reference proteome</keyword>
<keyword id="KW-0786">Thiamine pyrophosphate</keyword>
<reference key="1">
    <citation type="journal article" date="2002" name="DNA Res.">
        <title>Complete genomic sequence of nitrogen-fixing symbiotic bacterium Bradyrhizobium japonicum USDA110.</title>
        <authorList>
            <person name="Kaneko T."/>
            <person name="Nakamura Y."/>
            <person name="Sato S."/>
            <person name="Minamisawa K."/>
            <person name="Uchiumi T."/>
            <person name="Sasamoto S."/>
            <person name="Watanabe A."/>
            <person name="Idesawa K."/>
            <person name="Iriguchi M."/>
            <person name="Kawashima K."/>
            <person name="Kohara M."/>
            <person name="Matsumoto M."/>
            <person name="Shimpo S."/>
            <person name="Tsuruoka H."/>
            <person name="Wada T."/>
            <person name="Yamada M."/>
            <person name="Tabata S."/>
        </authorList>
    </citation>
    <scope>NUCLEOTIDE SEQUENCE [LARGE SCALE GENOMIC DNA]</scope>
    <source>
        <strain>JCM 10833 / BCRC 13528 / IAM 13628 / NBRC 14792 / USDA 110</strain>
    </source>
</reference>
<sequence>MKVGRNMTNQQQSAAASSDLDLLDRYWRAANYLSVGQIYLLDNPLLREPLRAEHIKPRLLGHWGTTPGLNFIYAHLNRVIRALDLNVLYVCGPGHGGPGMVANTYLEGSYSEIYPNIARDADGLRKLFRQFSFPGGIPSHAAPETPGSIHEGGELGYALVHAYGAALDNPDLVVACVVGDGEAETGPLAASWHSNKFLNPAHDGAVLPILHLNGYKIANPTVLGRMSDSEIRDLFRGFGHEPLFVEGDDPKLMHRIMADALDVAFASIRSIQQHARDGRKNIERPRWPMIVLRSPKGWTGPKEVDGKKVEGFWRAHQVPVASCRENPAHLKVLEDWMRSYEPEKLFDASGALVPELQALAPEGNRRMGANPHANGGLLKKELKLPDFRSFAVEVPQPGAVTGEATRELGRFLRDVIRLNAQERNFRIMGPDETASNRLDAVFETTERVWMEPIEPYDVHLAQDGRVMEVLSEHLCQGWLEGYLLTGRHGFFSCYEAFIHIVDSMFNQHAKWLKVTRHLPWRRPIASLNYLLTSHVWRQDHNGFSHQDPGFVDLVANKKADIVRIYFPPDANTLLWIADHCLRTYNRINVIVAGKQPAPQWLSMQDAATHCDVGIGIWTWAGTEDAGGEPDVVMACAGDVPTLETLAAVDLLRKALPDLNIRVVNVVDLMTLQPQDQHPHGLSDRDFDSLFTRDKPVIFAYHGYPHLIHRLTYNRTNHAGLHVRGFAEEGTTTTPFDMVVLNELDRYHLAIEAIERVPGLATRAAQVKQQLRDKLLEHSRYVREHGEDMPEIRDWVWPGKPG</sequence>
<accession>Q89S87</accession>
<name>PHK_BRADU</name>
<organism>
    <name type="scientific">Bradyrhizobium diazoefficiens (strain JCM 10833 / BCRC 13528 / IAM 13628 / NBRC 14792 / USDA 110)</name>
    <dbReference type="NCBI Taxonomy" id="224911"/>
    <lineage>
        <taxon>Bacteria</taxon>
        <taxon>Pseudomonadati</taxon>
        <taxon>Pseudomonadota</taxon>
        <taxon>Alphaproteobacteria</taxon>
        <taxon>Hyphomicrobiales</taxon>
        <taxon>Nitrobacteraceae</taxon>
        <taxon>Bradyrhizobium</taxon>
    </lineage>
</organism>
<gene>
    <name type="ordered locus">bll2518</name>
</gene>
<evidence type="ECO:0000255" key="1">
    <source>
        <dbReference type="HAMAP-Rule" id="MF_01403"/>
    </source>
</evidence>
<feature type="chain" id="PRO_0000193871" description="Probable phosphoketolase">
    <location>
        <begin position="1"/>
        <end position="801"/>
    </location>
</feature>
<proteinExistence type="inferred from homology"/>
<comment type="cofactor">
    <cofactor evidence="1">
        <name>thiamine diphosphate</name>
        <dbReference type="ChEBI" id="CHEBI:58937"/>
    </cofactor>
</comment>
<comment type="similarity">
    <text evidence="1">Belongs to the XFP family.</text>
</comment>
<dbReference type="EC" id="4.1.2.-" evidence="1"/>
<dbReference type="EMBL" id="BA000040">
    <property type="protein sequence ID" value="BAC47783.1"/>
    <property type="molecule type" value="Genomic_DNA"/>
</dbReference>
<dbReference type="RefSeq" id="NP_769158.1">
    <property type="nucleotide sequence ID" value="NC_004463.1"/>
</dbReference>
<dbReference type="SMR" id="Q89S87"/>
<dbReference type="STRING" id="224911.AAV28_09525"/>
<dbReference type="EnsemblBacteria" id="BAC47783">
    <property type="protein sequence ID" value="BAC47783"/>
    <property type="gene ID" value="BAC47783"/>
</dbReference>
<dbReference type="KEGG" id="bja:bll2518"/>
<dbReference type="PATRIC" id="fig|224911.5.peg.2475"/>
<dbReference type="eggNOG" id="COG3957">
    <property type="taxonomic scope" value="Bacteria"/>
</dbReference>
<dbReference type="HOGENOM" id="CLU_013954_2_0_5"/>
<dbReference type="InParanoid" id="Q89S87"/>
<dbReference type="OrthoDB" id="9768449at2"/>
<dbReference type="PhylomeDB" id="Q89S87"/>
<dbReference type="Proteomes" id="UP000002526">
    <property type="component" value="Chromosome"/>
</dbReference>
<dbReference type="GO" id="GO:0016832">
    <property type="term" value="F:aldehyde-lyase activity"/>
    <property type="evidence" value="ECO:0007669"/>
    <property type="project" value="UniProtKB-UniRule"/>
</dbReference>
<dbReference type="GO" id="GO:0005975">
    <property type="term" value="P:carbohydrate metabolic process"/>
    <property type="evidence" value="ECO:0007669"/>
    <property type="project" value="InterPro"/>
</dbReference>
<dbReference type="CDD" id="cd02011">
    <property type="entry name" value="TPP_PK"/>
    <property type="match status" value="1"/>
</dbReference>
<dbReference type="FunFam" id="3.40.50.970:FF:000091">
    <property type="entry name" value="Xylulose-5-phosphate/fructose-6-phosphate phosphoketolase"/>
    <property type="match status" value="1"/>
</dbReference>
<dbReference type="Gene3D" id="3.40.50.920">
    <property type="match status" value="1"/>
</dbReference>
<dbReference type="Gene3D" id="3.40.50.970">
    <property type="match status" value="2"/>
</dbReference>
<dbReference type="HAMAP" id="MF_01403">
    <property type="entry name" value="Phosphoketolase"/>
    <property type="match status" value="1"/>
</dbReference>
<dbReference type="InterPro" id="IPR023962">
    <property type="entry name" value="Phosphoketolase"/>
</dbReference>
<dbReference type="InterPro" id="IPR029061">
    <property type="entry name" value="THDP-binding"/>
</dbReference>
<dbReference type="InterPro" id="IPR009014">
    <property type="entry name" value="Transketo_C/PFOR_II"/>
</dbReference>
<dbReference type="InterPro" id="IPR005593">
    <property type="entry name" value="Xul5P/Fru6P_PKetolase"/>
</dbReference>
<dbReference type="InterPro" id="IPR018969">
    <property type="entry name" value="Xul5P/Fru6P_PKetolase_C"/>
</dbReference>
<dbReference type="InterPro" id="IPR019790">
    <property type="entry name" value="Xul5P/Fru6P_PKetolase_CS"/>
</dbReference>
<dbReference type="InterPro" id="IPR018970">
    <property type="entry name" value="Xul5P/Fru6P_PKetolase_N"/>
</dbReference>
<dbReference type="InterPro" id="IPR019789">
    <property type="entry name" value="Xul5P/Fru6P_PKetolase_ThDP_BS"/>
</dbReference>
<dbReference type="NCBIfam" id="NF003616">
    <property type="entry name" value="PRK05261.1-1"/>
    <property type="match status" value="1"/>
</dbReference>
<dbReference type="NCBIfam" id="NF003617">
    <property type="entry name" value="PRK05261.1-2"/>
    <property type="match status" value="1"/>
</dbReference>
<dbReference type="NCBIfam" id="NF003619">
    <property type="entry name" value="PRK05261.1-4"/>
    <property type="match status" value="1"/>
</dbReference>
<dbReference type="NCBIfam" id="NF003621">
    <property type="entry name" value="PRK05261.1-6"/>
    <property type="match status" value="1"/>
</dbReference>
<dbReference type="PANTHER" id="PTHR31273">
    <property type="entry name" value="PHOSPHOKETOLASE-RELATED"/>
    <property type="match status" value="1"/>
</dbReference>
<dbReference type="PANTHER" id="PTHR31273:SF0">
    <property type="entry name" value="PHOSPHOKETOLASE-RELATED"/>
    <property type="match status" value="1"/>
</dbReference>
<dbReference type="Pfam" id="PF03894">
    <property type="entry name" value="XFP"/>
    <property type="match status" value="1"/>
</dbReference>
<dbReference type="Pfam" id="PF09363">
    <property type="entry name" value="XFP_C"/>
    <property type="match status" value="1"/>
</dbReference>
<dbReference type="Pfam" id="PF09364">
    <property type="entry name" value="XFP_N"/>
    <property type="match status" value="1"/>
</dbReference>
<dbReference type="PIRSF" id="PIRSF017245">
    <property type="entry name" value="Phosphoketolase"/>
    <property type="match status" value="1"/>
</dbReference>
<dbReference type="SUPFAM" id="SSF52518">
    <property type="entry name" value="Thiamin diphosphate-binding fold (THDP-binding)"/>
    <property type="match status" value="2"/>
</dbReference>
<dbReference type="PROSITE" id="PS60002">
    <property type="entry name" value="PHOSPHOKETOLASE_1"/>
    <property type="match status" value="1"/>
</dbReference>
<dbReference type="PROSITE" id="PS60003">
    <property type="entry name" value="PHOSPHOKETOLASE_2"/>
    <property type="match status" value="1"/>
</dbReference>
<protein>
    <recommendedName>
        <fullName evidence="1">Probable phosphoketolase</fullName>
        <ecNumber evidence="1">4.1.2.-</ecNumber>
    </recommendedName>
</protein>